<sequence>MPFTLGQRWISDTESELGLGTVVAIDVRMITLLFPATGENRLYARNDSPITRVMFNPSDTITHHEGWQLKVEEVTQENGLITYIGTRLDTEETGVAMREVLLDSKLTFSKPQDRLFAGQIDRMDRFALRFRARKYQSEQFRLPWSGLRGIRASLIPHQLHIAYEVGQRHAPRVLLADEVGLGKTIEAGMIIHQQLLAGRAERVLIVVPESLQHQWLVEMLRRFNLRFSLFDDSRYSEALLDSSNPFDTEQMVICSLDFVRRNKQRLEQLADASWDLLVVDEAHHLAWSEEAPSREYQVIEQLAEHIPGVLLLTATPEQLGQQSHFARLRLLDPDRFHDYEEFVNEQQKYRPIADAVTLLLGGERLTDDKLNLLGELIDEQDIEPLLKAANSQSEDSEAARQELVTMLMDRHGTSRVLFRNTRNGVKGFPHRVLHQIKLPLPTQYQTAIKVSGIMGAKKTLDARAKDMLYPEQIYQEFEGENATWWNFDPRVEWLLNYLVANRGEKVLVICAQAATALQLEQVLREREAIRAAVFHEGLSLIERDRAAAYFASEEDGAQVLLCSEIGSEGRNFQFACQLVMFDLPFNPDLLEQRIGRLDRIGQNREIQIMVPYLEDTAQAILVRWYHEGLDAFEHTCPTGRTIYDSSYQELISYLATPSEQEGLDEFIHTCRQQHEGLKLQLEQGRDRLLEMHSNGGEHGQELAQSIAEQDNDINLVSFALNLFDIVGINQEDRSDNLIVLTPSDHMLVPDFPGLPPDGCTVTFDREQALSREDAQFVSWEHPIIRNGLDLILSGDTGSCAVSLLKNKALPVGTLLAELVYVVEAQAPKHLQLTRFLPPTPVRMLMDRNGTNLAAQVEFESFNRQLNAVNRHTSSKLVNAVQQEVHTMLQQAEALVEAQAQALIETAKREADDKLSTELARLEALKAVNPNIRDDEIEALEHNRKMVLENLNQAGWRLDAIRLVVVTHQ</sequence>
<accession>A7FM96</accession>
<keyword id="KW-0010">Activator</keyword>
<keyword id="KW-0067">ATP-binding</keyword>
<keyword id="KW-0238">DNA-binding</keyword>
<keyword id="KW-0347">Helicase</keyword>
<keyword id="KW-0378">Hydrolase</keyword>
<keyword id="KW-0547">Nucleotide-binding</keyword>
<keyword id="KW-0804">Transcription</keyword>
<keyword id="KW-0805">Transcription regulation</keyword>
<organism>
    <name type="scientific">Yersinia pseudotuberculosis serotype O:1b (strain IP 31758)</name>
    <dbReference type="NCBI Taxonomy" id="349747"/>
    <lineage>
        <taxon>Bacteria</taxon>
        <taxon>Pseudomonadati</taxon>
        <taxon>Pseudomonadota</taxon>
        <taxon>Gammaproteobacteria</taxon>
        <taxon>Enterobacterales</taxon>
        <taxon>Yersiniaceae</taxon>
        <taxon>Yersinia</taxon>
    </lineage>
</organism>
<proteinExistence type="inferred from homology"/>
<name>RAPA_YERP3</name>
<reference key="1">
    <citation type="journal article" date="2007" name="PLoS Genet.">
        <title>The complete genome sequence of Yersinia pseudotuberculosis IP31758, the causative agent of Far East scarlet-like fever.</title>
        <authorList>
            <person name="Eppinger M."/>
            <person name="Rosovitz M.J."/>
            <person name="Fricke W.F."/>
            <person name="Rasko D.A."/>
            <person name="Kokorina G."/>
            <person name="Fayolle C."/>
            <person name="Lindler L.E."/>
            <person name="Carniel E."/>
            <person name="Ravel J."/>
        </authorList>
    </citation>
    <scope>NUCLEOTIDE SEQUENCE [LARGE SCALE GENOMIC DNA]</scope>
    <source>
        <strain>IP 31758</strain>
    </source>
</reference>
<dbReference type="EC" id="3.6.4.-" evidence="1"/>
<dbReference type="EMBL" id="CP000720">
    <property type="protein sequence ID" value="ABS48687.1"/>
    <property type="molecule type" value="Genomic_DNA"/>
</dbReference>
<dbReference type="RefSeq" id="WP_011191719.1">
    <property type="nucleotide sequence ID" value="NC_009708.1"/>
</dbReference>
<dbReference type="SMR" id="A7FM96"/>
<dbReference type="GeneID" id="49787339"/>
<dbReference type="KEGG" id="ypi:YpsIP31758_3419"/>
<dbReference type="HOGENOM" id="CLU_011520_0_0_6"/>
<dbReference type="Proteomes" id="UP000002412">
    <property type="component" value="Chromosome"/>
</dbReference>
<dbReference type="GO" id="GO:0005524">
    <property type="term" value="F:ATP binding"/>
    <property type="evidence" value="ECO:0007669"/>
    <property type="project" value="UniProtKB-UniRule"/>
</dbReference>
<dbReference type="GO" id="GO:0003677">
    <property type="term" value="F:DNA binding"/>
    <property type="evidence" value="ECO:0007669"/>
    <property type="project" value="UniProtKB-KW"/>
</dbReference>
<dbReference type="GO" id="GO:0004386">
    <property type="term" value="F:helicase activity"/>
    <property type="evidence" value="ECO:0007669"/>
    <property type="project" value="UniProtKB-UniRule"/>
</dbReference>
<dbReference type="GO" id="GO:0016817">
    <property type="term" value="F:hydrolase activity, acting on acid anhydrides"/>
    <property type="evidence" value="ECO:0007669"/>
    <property type="project" value="InterPro"/>
</dbReference>
<dbReference type="GO" id="GO:0006355">
    <property type="term" value="P:regulation of DNA-templated transcription"/>
    <property type="evidence" value="ECO:0007669"/>
    <property type="project" value="UniProtKB-UniRule"/>
</dbReference>
<dbReference type="CDD" id="cd18011">
    <property type="entry name" value="DEXDc_RapA"/>
    <property type="match status" value="1"/>
</dbReference>
<dbReference type="CDD" id="cd18793">
    <property type="entry name" value="SF2_C_SNF"/>
    <property type="match status" value="1"/>
</dbReference>
<dbReference type="FunFam" id="3.40.50.10810:FF:000012">
    <property type="entry name" value="RNA polymerase-associated protein RapA"/>
    <property type="match status" value="1"/>
</dbReference>
<dbReference type="Gene3D" id="2.30.30.140">
    <property type="match status" value="1"/>
</dbReference>
<dbReference type="Gene3D" id="2.30.30.930">
    <property type="match status" value="1"/>
</dbReference>
<dbReference type="Gene3D" id="3.30.360.80">
    <property type="match status" value="1"/>
</dbReference>
<dbReference type="Gene3D" id="6.10.140.1500">
    <property type="match status" value="1"/>
</dbReference>
<dbReference type="Gene3D" id="6.10.140.2230">
    <property type="match status" value="1"/>
</dbReference>
<dbReference type="Gene3D" id="3.40.50.300">
    <property type="entry name" value="P-loop containing nucleotide triphosphate hydrolases"/>
    <property type="match status" value="1"/>
</dbReference>
<dbReference type="Gene3D" id="3.40.50.10810">
    <property type="entry name" value="Tandem AAA-ATPase domain"/>
    <property type="match status" value="1"/>
</dbReference>
<dbReference type="HAMAP" id="MF_01821">
    <property type="entry name" value="Helicase_RapA"/>
    <property type="match status" value="1"/>
</dbReference>
<dbReference type="InterPro" id="IPR014001">
    <property type="entry name" value="Helicase_ATP-bd"/>
</dbReference>
<dbReference type="InterPro" id="IPR001650">
    <property type="entry name" value="Helicase_C-like"/>
</dbReference>
<dbReference type="InterPro" id="IPR023949">
    <property type="entry name" value="Helicase_RapA"/>
</dbReference>
<dbReference type="InterPro" id="IPR027417">
    <property type="entry name" value="P-loop_NTPase"/>
</dbReference>
<dbReference type="InterPro" id="IPR022737">
    <property type="entry name" value="RapA_C"/>
</dbReference>
<dbReference type="InterPro" id="IPR038718">
    <property type="entry name" value="SNF2-like_sf"/>
</dbReference>
<dbReference type="InterPro" id="IPR049730">
    <property type="entry name" value="SNF2/RAD54-like_C"/>
</dbReference>
<dbReference type="InterPro" id="IPR000330">
    <property type="entry name" value="SNF2_N"/>
</dbReference>
<dbReference type="InterPro" id="IPR040765">
    <property type="entry name" value="Tudor_1_RapA"/>
</dbReference>
<dbReference type="InterPro" id="IPR040766">
    <property type="entry name" value="Tudor_2_RapA"/>
</dbReference>
<dbReference type="NCBIfam" id="NF003426">
    <property type="entry name" value="PRK04914.1"/>
    <property type="match status" value="1"/>
</dbReference>
<dbReference type="PANTHER" id="PTHR45766">
    <property type="entry name" value="DNA ANNEALING HELICASE AND ENDONUCLEASE ZRANB3 FAMILY MEMBER"/>
    <property type="match status" value="1"/>
</dbReference>
<dbReference type="PANTHER" id="PTHR45766:SF6">
    <property type="entry name" value="SWI_SNF-RELATED MATRIX-ASSOCIATED ACTIN-DEPENDENT REGULATOR OF CHROMATIN SUBFAMILY A-LIKE PROTEIN 1"/>
    <property type="match status" value="1"/>
</dbReference>
<dbReference type="Pfam" id="PF00271">
    <property type="entry name" value="Helicase_C"/>
    <property type="match status" value="1"/>
</dbReference>
<dbReference type="Pfam" id="PF12137">
    <property type="entry name" value="RapA_C"/>
    <property type="match status" value="1"/>
</dbReference>
<dbReference type="Pfam" id="PF00176">
    <property type="entry name" value="SNF2-rel_dom"/>
    <property type="match status" value="1"/>
</dbReference>
<dbReference type="Pfam" id="PF18339">
    <property type="entry name" value="Tudor_1_RapA"/>
    <property type="match status" value="1"/>
</dbReference>
<dbReference type="Pfam" id="PF18337">
    <property type="entry name" value="Tudor_RapA"/>
    <property type="match status" value="1"/>
</dbReference>
<dbReference type="SMART" id="SM00487">
    <property type="entry name" value="DEXDc"/>
    <property type="match status" value="1"/>
</dbReference>
<dbReference type="SMART" id="SM00490">
    <property type="entry name" value="HELICc"/>
    <property type="match status" value="1"/>
</dbReference>
<dbReference type="SUPFAM" id="SSF52540">
    <property type="entry name" value="P-loop containing nucleoside triphosphate hydrolases"/>
    <property type="match status" value="2"/>
</dbReference>
<dbReference type="PROSITE" id="PS51192">
    <property type="entry name" value="HELICASE_ATP_BIND_1"/>
    <property type="match status" value="1"/>
</dbReference>
<dbReference type="PROSITE" id="PS51194">
    <property type="entry name" value="HELICASE_CTER"/>
    <property type="match status" value="1"/>
</dbReference>
<evidence type="ECO:0000255" key="1">
    <source>
        <dbReference type="HAMAP-Rule" id="MF_01821"/>
    </source>
</evidence>
<protein>
    <recommendedName>
        <fullName evidence="1">RNA polymerase-associated protein RapA</fullName>
        <ecNumber evidence="1">3.6.4.-</ecNumber>
    </recommendedName>
    <alternativeName>
        <fullName evidence="1">ATP-dependent helicase HepA</fullName>
    </alternativeName>
</protein>
<feature type="chain" id="PRO_1000088400" description="RNA polymerase-associated protein RapA">
    <location>
        <begin position="1"/>
        <end position="968"/>
    </location>
</feature>
<feature type="domain" description="Helicase ATP-binding" evidence="1">
    <location>
        <begin position="164"/>
        <end position="334"/>
    </location>
</feature>
<feature type="domain" description="Helicase C-terminal" evidence="1">
    <location>
        <begin position="490"/>
        <end position="644"/>
    </location>
</feature>
<feature type="short sequence motif" description="DEAH box">
    <location>
        <begin position="280"/>
        <end position="283"/>
    </location>
</feature>
<feature type="binding site" evidence="1">
    <location>
        <begin position="177"/>
        <end position="184"/>
    </location>
    <ligand>
        <name>ATP</name>
        <dbReference type="ChEBI" id="CHEBI:30616"/>
    </ligand>
</feature>
<gene>
    <name evidence="1" type="primary">rapA</name>
    <name type="ordered locus">YpsIP31758_3419</name>
</gene>
<comment type="function">
    <text evidence="1">Transcription regulator that activates transcription by stimulating RNA polymerase (RNAP) recycling in case of stress conditions such as supercoiled DNA or high salt concentrations. Probably acts by releasing the RNAP, when it is trapped or immobilized on tightly supercoiled DNA. Does not activate transcription on linear DNA. Probably not involved in DNA repair.</text>
</comment>
<comment type="subunit">
    <text evidence="1">Interacts with the RNAP. Has a higher affinity for the core RNAP than for the holoenzyme. Its ATPase activity is stimulated by binding to RNAP.</text>
</comment>
<comment type="similarity">
    <text evidence="1">Belongs to the SNF2/RAD54 helicase family. RapA subfamily.</text>
</comment>